<name>ACPS_CHLAA</name>
<reference key="1">
    <citation type="journal article" date="2011" name="BMC Genomics">
        <title>Complete genome sequence of the filamentous anoxygenic phototrophic bacterium Chloroflexus aurantiacus.</title>
        <authorList>
            <person name="Tang K.H."/>
            <person name="Barry K."/>
            <person name="Chertkov O."/>
            <person name="Dalin E."/>
            <person name="Han C.S."/>
            <person name="Hauser L.J."/>
            <person name="Honchak B.M."/>
            <person name="Karbach L.E."/>
            <person name="Land M.L."/>
            <person name="Lapidus A."/>
            <person name="Larimer F.W."/>
            <person name="Mikhailova N."/>
            <person name="Pitluck S."/>
            <person name="Pierson B.K."/>
            <person name="Blankenship R.E."/>
        </authorList>
    </citation>
    <scope>NUCLEOTIDE SEQUENCE [LARGE SCALE GENOMIC DNA]</scope>
    <source>
        <strain>ATCC 29366 / DSM 635 / J-10-fl</strain>
    </source>
</reference>
<sequence>MLYHGVDLVEVARIRHAVVRYGQRFVQRVYTATEQADCLAGSGDVRYEALAARWAAKEACAKALGIGLRGLGALAVADRPRAGFHEIEVVRDNDGRPVLRLSGFAAEQAAALGICALAVSLSHTDELALASVVAWAG</sequence>
<dbReference type="EC" id="2.7.8.7" evidence="1"/>
<dbReference type="EMBL" id="CP000909">
    <property type="protein sequence ID" value="ABY33723.1"/>
    <property type="molecule type" value="Genomic_DNA"/>
</dbReference>
<dbReference type="RefSeq" id="WP_012256379.1">
    <property type="nucleotide sequence ID" value="NC_010175.1"/>
</dbReference>
<dbReference type="RefSeq" id="YP_001634112.1">
    <property type="nucleotide sequence ID" value="NC_010175.1"/>
</dbReference>
<dbReference type="SMR" id="A9WE63"/>
<dbReference type="FunCoup" id="A9WE63">
    <property type="interactions" value="128"/>
</dbReference>
<dbReference type="STRING" id="324602.Caur_0475"/>
<dbReference type="EnsemblBacteria" id="ABY33723">
    <property type="protein sequence ID" value="ABY33723"/>
    <property type="gene ID" value="Caur_0475"/>
</dbReference>
<dbReference type="KEGG" id="cau:Caur_0475"/>
<dbReference type="PATRIC" id="fig|324602.8.peg.539"/>
<dbReference type="eggNOG" id="COG0736">
    <property type="taxonomic scope" value="Bacteria"/>
</dbReference>
<dbReference type="HOGENOM" id="CLU_089696_0_2_0"/>
<dbReference type="InParanoid" id="A9WE63"/>
<dbReference type="Proteomes" id="UP000002008">
    <property type="component" value="Chromosome"/>
</dbReference>
<dbReference type="GO" id="GO:0005737">
    <property type="term" value="C:cytoplasm"/>
    <property type="evidence" value="ECO:0007669"/>
    <property type="project" value="UniProtKB-SubCell"/>
</dbReference>
<dbReference type="GO" id="GO:0008897">
    <property type="term" value="F:holo-[acyl-carrier-protein] synthase activity"/>
    <property type="evidence" value="ECO:0007669"/>
    <property type="project" value="UniProtKB-UniRule"/>
</dbReference>
<dbReference type="GO" id="GO:0000287">
    <property type="term" value="F:magnesium ion binding"/>
    <property type="evidence" value="ECO:0007669"/>
    <property type="project" value="UniProtKB-UniRule"/>
</dbReference>
<dbReference type="GO" id="GO:0006633">
    <property type="term" value="P:fatty acid biosynthetic process"/>
    <property type="evidence" value="ECO:0007669"/>
    <property type="project" value="UniProtKB-UniRule"/>
</dbReference>
<dbReference type="Gene3D" id="3.90.470.20">
    <property type="entry name" value="4'-phosphopantetheinyl transferase domain"/>
    <property type="match status" value="1"/>
</dbReference>
<dbReference type="HAMAP" id="MF_00101">
    <property type="entry name" value="AcpS"/>
    <property type="match status" value="1"/>
</dbReference>
<dbReference type="InterPro" id="IPR008278">
    <property type="entry name" value="4-PPantetheinyl_Trfase_dom"/>
</dbReference>
<dbReference type="InterPro" id="IPR037143">
    <property type="entry name" value="4-PPantetheinyl_Trfase_dom_sf"/>
</dbReference>
<dbReference type="InterPro" id="IPR002582">
    <property type="entry name" value="ACPS"/>
</dbReference>
<dbReference type="InterPro" id="IPR004568">
    <property type="entry name" value="Ppantetheine-prot_Trfase_dom"/>
</dbReference>
<dbReference type="NCBIfam" id="TIGR00516">
    <property type="entry name" value="acpS"/>
    <property type="match status" value="1"/>
</dbReference>
<dbReference type="NCBIfam" id="TIGR00556">
    <property type="entry name" value="pantethn_trn"/>
    <property type="match status" value="1"/>
</dbReference>
<dbReference type="Pfam" id="PF01648">
    <property type="entry name" value="ACPS"/>
    <property type="match status" value="1"/>
</dbReference>
<dbReference type="SUPFAM" id="SSF56214">
    <property type="entry name" value="4'-phosphopantetheinyl transferase"/>
    <property type="match status" value="1"/>
</dbReference>
<keyword id="KW-0963">Cytoplasm</keyword>
<keyword id="KW-0275">Fatty acid biosynthesis</keyword>
<keyword id="KW-0276">Fatty acid metabolism</keyword>
<keyword id="KW-0444">Lipid biosynthesis</keyword>
<keyword id="KW-0443">Lipid metabolism</keyword>
<keyword id="KW-0460">Magnesium</keyword>
<keyword id="KW-0479">Metal-binding</keyword>
<keyword id="KW-1185">Reference proteome</keyword>
<keyword id="KW-0808">Transferase</keyword>
<proteinExistence type="inferred from homology"/>
<comment type="function">
    <text evidence="1">Transfers the 4'-phosphopantetheine moiety from coenzyme A to a Ser of acyl-carrier-protein.</text>
</comment>
<comment type="catalytic activity">
    <reaction evidence="1">
        <text>apo-[ACP] + CoA = holo-[ACP] + adenosine 3',5'-bisphosphate + H(+)</text>
        <dbReference type="Rhea" id="RHEA:12068"/>
        <dbReference type="Rhea" id="RHEA-COMP:9685"/>
        <dbReference type="Rhea" id="RHEA-COMP:9690"/>
        <dbReference type="ChEBI" id="CHEBI:15378"/>
        <dbReference type="ChEBI" id="CHEBI:29999"/>
        <dbReference type="ChEBI" id="CHEBI:57287"/>
        <dbReference type="ChEBI" id="CHEBI:58343"/>
        <dbReference type="ChEBI" id="CHEBI:64479"/>
        <dbReference type="EC" id="2.7.8.7"/>
    </reaction>
</comment>
<comment type="cofactor">
    <cofactor evidence="1">
        <name>Mg(2+)</name>
        <dbReference type="ChEBI" id="CHEBI:18420"/>
    </cofactor>
</comment>
<comment type="subcellular location">
    <subcellularLocation>
        <location evidence="1">Cytoplasm</location>
    </subcellularLocation>
</comment>
<comment type="similarity">
    <text evidence="1">Belongs to the P-Pant transferase superfamily. AcpS family.</text>
</comment>
<feature type="chain" id="PRO_1000093863" description="Holo-[acyl-carrier-protein] synthase">
    <location>
        <begin position="1"/>
        <end position="137"/>
    </location>
</feature>
<feature type="binding site" evidence="1">
    <location>
        <position position="7"/>
    </location>
    <ligand>
        <name>Mg(2+)</name>
        <dbReference type="ChEBI" id="CHEBI:18420"/>
    </ligand>
</feature>
<feature type="binding site" evidence="1">
    <location>
        <position position="58"/>
    </location>
    <ligand>
        <name>Mg(2+)</name>
        <dbReference type="ChEBI" id="CHEBI:18420"/>
    </ligand>
</feature>
<protein>
    <recommendedName>
        <fullName evidence="1">Holo-[acyl-carrier-protein] synthase</fullName>
        <shortName evidence="1">Holo-ACP synthase</shortName>
        <ecNumber evidence="1">2.7.8.7</ecNumber>
    </recommendedName>
    <alternativeName>
        <fullName evidence="1">4'-phosphopantetheinyl transferase AcpS</fullName>
    </alternativeName>
</protein>
<accession>A9WE63</accession>
<organism>
    <name type="scientific">Chloroflexus aurantiacus (strain ATCC 29366 / DSM 635 / J-10-fl)</name>
    <dbReference type="NCBI Taxonomy" id="324602"/>
    <lineage>
        <taxon>Bacteria</taxon>
        <taxon>Bacillati</taxon>
        <taxon>Chloroflexota</taxon>
        <taxon>Chloroflexia</taxon>
        <taxon>Chloroflexales</taxon>
        <taxon>Chloroflexineae</taxon>
        <taxon>Chloroflexaceae</taxon>
        <taxon>Chloroflexus</taxon>
    </lineage>
</organism>
<evidence type="ECO:0000255" key="1">
    <source>
        <dbReference type="HAMAP-Rule" id="MF_00101"/>
    </source>
</evidence>
<gene>
    <name evidence="1" type="primary">acpS</name>
    <name type="ordered locus">Caur_0475</name>
</gene>